<accession>P41722</accession>
<dbReference type="EMBL" id="U12688">
    <property type="protein sequence ID" value="AAB49544.1"/>
    <property type="molecule type" value="Genomic_DNA"/>
</dbReference>
<dbReference type="GO" id="GO:0020002">
    <property type="term" value="C:host cell plasma membrane"/>
    <property type="evidence" value="ECO:0007669"/>
    <property type="project" value="UniProtKB-SubCell"/>
</dbReference>
<dbReference type="GO" id="GO:0016020">
    <property type="term" value="C:membrane"/>
    <property type="evidence" value="ECO:0007669"/>
    <property type="project" value="UniProtKB-KW"/>
</dbReference>
<dbReference type="GO" id="GO:0019031">
    <property type="term" value="C:viral envelope"/>
    <property type="evidence" value="ECO:0007669"/>
    <property type="project" value="UniProtKB-KW"/>
</dbReference>
<dbReference type="GO" id="GO:0055036">
    <property type="term" value="C:virion membrane"/>
    <property type="evidence" value="ECO:0007669"/>
    <property type="project" value="UniProtKB-SubCell"/>
</dbReference>
<dbReference type="GO" id="GO:0039654">
    <property type="term" value="P:fusion of virus membrane with host endosome membrane"/>
    <property type="evidence" value="ECO:0007669"/>
    <property type="project" value="UniProtKB-KW"/>
</dbReference>
<dbReference type="GO" id="GO:0046718">
    <property type="term" value="P:symbiont entry into host cell"/>
    <property type="evidence" value="ECO:0007669"/>
    <property type="project" value="UniProtKB-KW"/>
</dbReference>
<protein>
    <recommendedName>
        <fullName>Major envelope glycoprotein</fullName>
    </recommendedName>
    <alternativeName>
        <fullName>gp64</fullName>
    </alternativeName>
</protein>
<name>FUS_NPVBM</name>
<evidence type="ECO:0000250" key="1"/>
<evidence type="ECO:0000305" key="2"/>
<reference key="1">
    <citation type="journal article" date="1994" name="J. Virol.">
        <title>A cysteine protease encoded by the baculovirus Bombyx mori nuclear polyhedrosis virus.</title>
        <authorList>
            <person name="Ohkawa T."/>
            <person name="Majima K."/>
            <person name="Maeda S."/>
        </authorList>
    </citation>
    <scope>NUCLEOTIDE SEQUENCE [GENOMIC DNA]</scope>
    <source>
        <strain>T3</strain>
    </source>
</reference>
<proteinExistence type="inferred from homology"/>
<gene>
    <name type="primary">GP64</name>
    <name type="synonym">P64</name>
</gene>
<sequence>LETVIVDNIKCNNKNCIIICNKKNCIVFNCIFNYKIS</sequence>
<keyword id="KW-1170">Fusion of virus membrane with host endosomal membrane</keyword>
<keyword id="KW-1168">Fusion of virus membrane with host membrane</keyword>
<keyword id="KW-0325">Glycoprotein</keyword>
<keyword id="KW-1032">Host cell membrane</keyword>
<keyword id="KW-1043">Host membrane</keyword>
<keyword id="KW-0449">Lipoprotein</keyword>
<keyword id="KW-0472">Membrane</keyword>
<keyword id="KW-0564">Palmitate</keyword>
<keyword id="KW-0597">Phosphoprotein</keyword>
<keyword id="KW-0812">Transmembrane</keyword>
<keyword id="KW-1133">Transmembrane helix</keyword>
<keyword id="KW-0261">Viral envelope protein</keyword>
<keyword id="KW-1162">Viral penetration into host cytoplasm</keyword>
<keyword id="KW-0946">Virion</keyword>
<keyword id="KW-1160">Virus entry into host cell</keyword>
<organism>
    <name type="scientific">Bombyx mori nuclear polyhedrosis virus</name>
    <name type="common">BmNPV</name>
    <dbReference type="NCBI Taxonomy" id="271108"/>
    <lineage>
        <taxon>Viruses</taxon>
        <taxon>Viruses incertae sedis</taxon>
        <taxon>Naldaviricetes</taxon>
        <taxon>Lefavirales</taxon>
        <taxon>Baculoviridae</taxon>
        <taxon>Alphabaculovirus</taxon>
        <taxon>Alphabaculovirus bomori</taxon>
    </lineage>
</organism>
<comment type="function">
    <text evidence="1">Envelope phosphoglycoprotein which mediates the fusion of viral and host endosomal membranes leading to virus entry into the host cell.</text>
</comment>
<comment type="subcellular location">
    <subcellularLocation>
        <location evidence="2">Virion membrane</location>
        <topology evidence="2">Single-pass membrane protein</topology>
    </subcellularLocation>
    <subcellularLocation>
        <location evidence="2">Host cell membrane</location>
        <topology evidence="2">Single-pass membrane protein</topology>
    </subcellularLocation>
</comment>
<comment type="PTM">
    <text evidence="1">Palmitoylated.</text>
</comment>
<comment type="similarity">
    <text evidence="2">Belongs to the baculoviridae gp64 family.</text>
</comment>
<organismHost>
    <name type="scientific">Bombyx mori</name>
    <name type="common">Silk moth</name>
    <dbReference type="NCBI Taxonomy" id="7091"/>
</organismHost>
<feature type="chain" id="PRO_0000132914" description="Major envelope glycoprotein">
    <location>
        <begin position="1" status="less than"/>
        <end position="37"/>
    </location>
</feature>
<feature type="non-terminal residue">
    <location>
        <position position="1"/>
    </location>
</feature>